<gene>
    <name evidence="25" type="primary">Gria4</name>
    <name type="synonym">Glur4</name>
</gene>
<feature type="signal peptide" evidence="6">
    <location>
        <begin position="1"/>
        <end position="20"/>
    </location>
</feature>
<feature type="chain" id="PRO_0000011540" description="Glutamate receptor 4">
    <location>
        <begin position="21"/>
        <end position="902"/>
    </location>
</feature>
<feature type="topological domain" description="Extracellular" evidence="1">
    <location>
        <begin position="22"/>
        <end position="544"/>
    </location>
</feature>
<feature type="transmembrane region" description="Helical" evidence="1">
    <location>
        <begin position="545"/>
        <end position="565"/>
    </location>
</feature>
<feature type="topological domain" description="Cytoplasmic" evidence="1">
    <location>
        <begin position="566"/>
        <end position="592"/>
    </location>
</feature>
<feature type="intramembrane region" description="Helical; Pore-forming" evidence="1">
    <location>
        <begin position="593"/>
        <end position="608"/>
    </location>
</feature>
<feature type="intramembrane region" evidence="1">
    <location>
        <begin position="609"/>
        <end position="611"/>
    </location>
</feature>
<feature type="topological domain" description="Cytoplasmic" evidence="1">
    <location>
        <begin position="612"/>
        <end position="617"/>
    </location>
</feature>
<feature type="transmembrane region" description="Helical" evidence="1">
    <location>
        <begin position="618"/>
        <end position="638"/>
    </location>
</feature>
<feature type="topological domain" description="Extracellular" evidence="1">
    <location>
        <begin position="639"/>
        <end position="813"/>
    </location>
</feature>
<feature type="transmembrane region" description="Helical; Name=M4" evidence="1">
    <location>
        <begin position="814"/>
        <end position="834"/>
    </location>
</feature>
<feature type="topological domain" description="Cytoplasmic" evidence="1">
    <location>
        <begin position="835"/>
        <end position="902"/>
    </location>
</feature>
<feature type="binding site" evidence="14 15 18 27 28 30">
    <location>
        <position position="500"/>
    </location>
    <ligand>
        <name>L-glutamate</name>
        <dbReference type="ChEBI" id="CHEBI:29985"/>
    </ligand>
</feature>
<feature type="binding site" evidence="14 15 18 27 28 30">
    <location>
        <position position="502"/>
    </location>
    <ligand>
        <name>L-glutamate</name>
        <dbReference type="ChEBI" id="CHEBI:29985"/>
    </ligand>
</feature>
<feature type="binding site" evidence="14 15 18 27 28 30">
    <location>
        <position position="507"/>
    </location>
    <ligand>
        <name>L-glutamate</name>
        <dbReference type="ChEBI" id="CHEBI:29985"/>
    </ligand>
</feature>
<feature type="binding site" evidence="14 15 18 27 28 30">
    <location>
        <position position="676"/>
    </location>
    <ligand>
        <name>L-glutamate</name>
        <dbReference type="ChEBI" id="CHEBI:29985"/>
    </ligand>
</feature>
<feature type="binding site" evidence="14 15 18 27 28 30">
    <location>
        <position position="677"/>
    </location>
    <ligand>
        <name>L-glutamate</name>
        <dbReference type="ChEBI" id="CHEBI:29985"/>
    </ligand>
</feature>
<feature type="binding site" evidence="14 15 18 27 28 30">
    <location>
        <position position="727"/>
    </location>
    <ligand>
        <name>L-glutamate</name>
        <dbReference type="ChEBI" id="CHEBI:29985"/>
    </ligand>
</feature>
<feature type="modified residue" description="Phosphoserine; by PKC/PRKCG" evidence="8">
    <location>
        <position position="862"/>
    </location>
</feature>
<feature type="lipid moiety-binding region" description="S-palmitoyl cysteine" evidence="3">
    <location>
        <position position="611"/>
    </location>
</feature>
<feature type="lipid moiety-binding region" description="S-palmitoyl cysteine" evidence="3">
    <location>
        <position position="837"/>
    </location>
</feature>
<feature type="glycosylation site" description="N-linked (GlcNAc...) asparagine" evidence="6">
    <location>
        <position position="52"/>
    </location>
</feature>
<feature type="glycosylation site" description="N-linked (GlcNAc...) asparagine" evidence="6">
    <location>
        <position position="56"/>
    </location>
</feature>
<feature type="glycosylation site" description="N-linked (GlcNAc...) asparagine" evidence="33">
    <location>
        <position position="258"/>
    </location>
</feature>
<feature type="glycosylation site" description="N-linked (GlcNAc...) asparagine" evidence="6">
    <location>
        <position position="371"/>
    </location>
</feature>
<feature type="glycosylation site" description="N-linked (GlcNAc...) asparagine" evidence="10">
    <location>
        <position position="407"/>
    </location>
</feature>
<feature type="glycosylation site" description="N-linked (GlcNAc...) asparagine" evidence="10">
    <location>
        <position position="414"/>
    </location>
</feature>
<feature type="disulfide bond" evidence="20">
    <location>
        <begin position="84"/>
        <end position="331"/>
    </location>
</feature>
<feature type="disulfide bond" evidence="14">
    <location>
        <begin position="740"/>
        <end position="795"/>
    </location>
</feature>
<feature type="splice variant" id="VSP_000123" description="In isoform 2." evidence="22 23">
    <original>GNA</original>
    <variation>RTP</variation>
    <location>
        <begin position="765"/>
        <end position="767"/>
    </location>
</feature>
<feature type="splice variant" id="VSP_000124" description="In isoform 2." evidence="22 23">
    <original>NEQGL</original>
    <variation>SEAGV</variation>
    <location>
        <begin position="776"/>
        <end position="780"/>
    </location>
</feature>
<feature type="splice variant" id="VSP_000125" description="In isoform 2." evidence="22 23">
    <original>SGGGD</original>
    <variation>PKDSG</variation>
    <location>
        <begin position="797"/>
        <end position="801"/>
    </location>
</feature>
<feature type="splice variant" id="VSP_000126" description="In isoform 3." evidence="21">
    <original>LTFSEATRNKARLSITGSVGENGRVLTPDCPKAVHTGTAIRQSSGLAVIASDLP</original>
    <variation>VAKSAQTFNPTSSQNTHNLATYREGYNVYGTESIKI</variation>
    <location>
        <begin position="849"/>
        <end position="902"/>
    </location>
</feature>
<feature type="mutagenesis site" description="No effect on surface expression and channel activity; when associated with Q-414." evidence="10">
    <original>N</original>
    <variation>Q</variation>
    <location>
        <position position="407"/>
    </location>
</feature>
<feature type="mutagenesis site" description="No effect on surface expression and channel activity; when associated with Q-407." evidence="10">
    <original>N</original>
    <variation>Q</variation>
    <location>
        <position position="414"/>
    </location>
</feature>
<feature type="sequence conflict" description="In Ref. 2; AAA41242." evidence="24" ref="2">
    <original>SA</original>
    <variation>RR</variation>
    <location>
        <begin position="111"/>
        <end position="112"/>
    </location>
</feature>
<feature type="sequence conflict" description="In Ref. 2; AAA41242." evidence="24" ref="2">
    <original>I</original>
    <variation>S</variation>
    <location>
        <position position="454"/>
    </location>
</feature>
<feature type="sequence conflict" description="In Ref. 2; AAA41242." evidence="24" ref="2">
    <original>T</original>
    <variation>I</variation>
    <location>
        <position position="734"/>
    </location>
</feature>
<feature type="sequence conflict" description="In Ref. 2; AAA41242." evidence="24" ref="2">
    <original>T</original>
    <variation>I</variation>
    <location>
        <position position="855"/>
    </location>
</feature>
<feature type="strand" evidence="36">
    <location>
        <begin position="25"/>
        <end position="33"/>
    </location>
</feature>
<feature type="helix" evidence="36">
    <location>
        <begin position="38"/>
        <end position="52"/>
    </location>
</feature>
<feature type="turn" evidence="36">
    <location>
        <begin position="57"/>
        <end position="59"/>
    </location>
</feature>
<feature type="strand" evidence="36">
    <location>
        <begin position="61"/>
        <end position="70"/>
    </location>
</feature>
<feature type="helix" evidence="36">
    <location>
        <begin position="76"/>
        <end position="88"/>
    </location>
</feature>
<feature type="strand" evidence="36">
    <location>
        <begin position="92"/>
        <end position="96"/>
    </location>
</feature>
<feature type="turn" evidence="36">
    <location>
        <begin position="100"/>
        <end position="102"/>
    </location>
</feature>
<feature type="helix" evidence="36">
    <location>
        <begin position="103"/>
        <end position="112"/>
    </location>
</feature>
<feature type="strand" evidence="36">
    <location>
        <begin position="116"/>
        <end position="119"/>
    </location>
</feature>
<feature type="strand" evidence="36">
    <location>
        <begin position="129"/>
        <end position="133"/>
    </location>
</feature>
<feature type="helix" evidence="36">
    <location>
        <begin position="139"/>
        <end position="148"/>
    </location>
</feature>
<feature type="strand" evidence="36">
    <location>
        <begin position="153"/>
        <end position="158"/>
    </location>
</feature>
<feature type="helix" evidence="36">
    <location>
        <begin position="165"/>
        <end position="175"/>
    </location>
</feature>
<feature type="turn" evidence="36">
    <location>
        <begin position="176"/>
        <end position="178"/>
    </location>
</feature>
<feature type="strand" evidence="36">
    <location>
        <begin position="180"/>
        <end position="185"/>
    </location>
</feature>
<feature type="helix" evidence="36">
    <location>
        <begin position="191"/>
        <end position="204"/>
    </location>
</feature>
<feature type="strand" evidence="36">
    <location>
        <begin position="208"/>
        <end position="212"/>
    </location>
</feature>
<feature type="helix" evidence="36">
    <location>
        <begin position="215"/>
        <end position="228"/>
    </location>
</feature>
<feature type="strand" evidence="36">
    <location>
        <begin position="236"/>
        <end position="239"/>
    </location>
</feature>
<feature type="strand" evidence="36">
    <location>
        <begin position="241"/>
        <end position="243"/>
    </location>
</feature>
<feature type="helix" evidence="36">
    <location>
        <begin position="244"/>
        <end position="246"/>
    </location>
</feature>
<feature type="helix" evidence="36">
    <location>
        <begin position="250"/>
        <end position="255"/>
    </location>
</feature>
<feature type="strand" evidence="36">
    <location>
        <begin position="258"/>
        <end position="263"/>
    </location>
</feature>
<feature type="helix" evidence="36">
    <location>
        <begin position="270"/>
        <end position="279"/>
    </location>
</feature>
<feature type="turn" evidence="36">
    <location>
        <begin position="284"/>
        <end position="286"/>
    </location>
</feature>
<feature type="turn" evidence="36">
    <location>
        <begin position="288"/>
        <end position="291"/>
    </location>
</feature>
<feature type="helix" evidence="36">
    <location>
        <begin position="296"/>
        <end position="317"/>
    </location>
</feature>
<feature type="helix" evidence="36">
    <location>
        <begin position="342"/>
        <end position="350"/>
    </location>
</feature>
<feature type="strand" evidence="36">
    <location>
        <begin position="353"/>
        <end position="356"/>
    </location>
</feature>
<feature type="strand" evidence="36">
    <location>
        <begin position="359"/>
        <end position="363"/>
    </location>
</feature>
<feature type="strand" evidence="37">
    <location>
        <begin position="367"/>
        <end position="369"/>
    </location>
</feature>
<feature type="strand" evidence="36">
    <location>
        <begin position="373"/>
        <end position="380"/>
    </location>
</feature>
<feature type="strand" evidence="36">
    <location>
        <begin position="383"/>
        <end position="391"/>
    </location>
</feature>
<feature type="turn" evidence="36">
    <location>
        <begin position="392"/>
        <end position="394"/>
    </location>
</feature>
<feature type="strand" evidence="36">
    <location>
        <begin position="395"/>
        <end position="398"/>
    </location>
</feature>
<feature type="strand" evidence="34">
    <location>
        <begin position="416"/>
        <end position="421"/>
    </location>
</feature>
<feature type="turn" evidence="34">
    <location>
        <begin position="425"/>
        <end position="427"/>
    </location>
</feature>
<feature type="strand" evidence="34">
    <location>
        <begin position="428"/>
        <end position="430"/>
    </location>
</feature>
<feature type="helix" evidence="34">
    <location>
        <begin position="434"/>
        <end position="436"/>
    </location>
</feature>
<feature type="helix" evidence="34">
    <location>
        <begin position="439"/>
        <end position="442"/>
    </location>
</feature>
<feature type="strand" evidence="34">
    <location>
        <begin position="443"/>
        <end position="445"/>
    </location>
</feature>
<feature type="helix" evidence="34">
    <location>
        <begin position="446"/>
        <end position="458"/>
    </location>
</feature>
<feature type="strand" evidence="34">
    <location>
        <begin position="461"/>
        <end position="466"/>
    </location>
</feature>
<feature type="turn" evidence="34">
    <location>
        <begin position="477"/>
        <end position="479"/>
    </location>
</feature>
<feature type="helix" evidence="34">
    <location>
        <begin position="484"/>
        <end position="490"/>
    </location>
</feature>
<feature type="strand" evidence="34">
    <location>
        <begin position="495"/>
        <end position="497"/>
    </location>
</feature>
<feature type="helix" evidence="34">
    <location>
        <begin position="505"/>
        <end position="508"/>
    </location>
</feature>
<feature type="strand" evidence="34">
    <location>
        <begin position="511"/>
        <end position="513"/>
    </location>
</feature>
<feature type="strand" evidence="34">
    <location>
        <begin position="517"/>
        <end position="520"/>
    </location>
</feature>
<feature type="strand" evidence="34">
    <location>
        <begin position="522"/>
        <end position="527"/>
    </location>
</feature>
<feature type="helix" evidence="34">
    <location>
        <begin position="658"/>
        <end position="662"/>
    </location>
</feature>
<feature type="strand" evidence="34">
    <location>
        <begin position="665"/>
        <end position="670"/>
    </location>
</feature>
<feature type="strand" evidence="35">
    <location>
        <begin position="672"/>
        <end position="675"/>
    </location>
</feature>
<feature type="helix" evidence="34">
    <location>
        <begin position="676"/>
        <end position="683"/>
    </location>
</feature>
<feature type="helix" evidence="34">
    <location>
        <begin position="687"/>
        <end position="698"/>
    </location>
</feature>
<feature type="strand" evidence="34">
    <location>
        <begin position="705"/>
        <end position="707"/>
    </location>
</feature>
<feature type="helix" evidence="34">
    <location>
        <begin position="708"/>
        <end position="717"/>
    </location>
</feature>
<feature type="turn" evidence="34">
    <location>
        <begin position="718"/>
        <end position="720"/>
    </location>
</feature>
<feature type="strand" evidence="34">
    <location>
        <begin position="721"/>
        <end position="727"/>
    </location>
</feature>
<feature type="helix" evidence="34">
    <location>
        <begin position="728"/>
        <end position="735"/>
    </location>
</feature>
<feature type="strand" evidence="34">
    <location>
        <begin position="742"/>
        <end position="746"/>
    </location>
</feature>
<feature type="strand" evidence="34">
    <location>
        <begin position="752"/>
        <end position="754"/>
    </location>
</feature>
<feature type="strand" evidence="34">
    <location>
        <begin position="757"/>
        <end position="759"/>
    </location>
</feature>
<feature type="helix" evidence="34">
    <location>
        <begin position="765"/>
        <end position="777"/>
    </location>
</feature>
<feature type="helix" evidence="34">
    <location>
        <begin position="780"/>
        <end position="789"/>
    </location>
</feature>
<feature type="turn" evidence="34">
    <location>
        <begin position="790"/>
        <end position="792"/>
    </location>
</feature>
<name>GRIA4_RAT</name>
<keyword id="KW-0002">3D-structure</keyword>
<keyword id="KW-0025">Alternative splicing</keyword>
<keyword id="KW-1003">Cell membrane</keyword>
<keyword id="KW-0966">Cell projection</keyword>
<keyword id="KW-0903">Direct protein sequencing</keyword>
<keyword id="KW-1015">Disulfide bond</keyword>
<keyword id="KW-0325">Glycoprotein</keyword>
<keyword id="KW-0407">Ion channel</keyword>
<keyword id="KW-0406">Ion transport</keyword>
<keyword id="KW-1071">Ligand-gated ion channel</keyword>
<keyword id="KW-0449">Lipoprotein</keyword>
<keyword id="KW-0472">Membrane</keyword>
<keyword id="KW-0564">Palmitate</keyword>
<keyword id="KW-0597">Phosphoprotein</keyword>
<keyword id="KW-0628">Postsynaptic cell membrane</keyword>
<keyword id="KW-0675">Receptor</keyword>
<keyword id="KW-1185">Reference proteome</keyword>
<keyword id="KW-0732">Signal</keyword>
<keyword id="KW-0770">Synapse</keyword>
<keyword id="KW-0812">Transmembrane</keyword>
<keyword id="KW-1133">Transmembrane helix</keyword>
<keyword id="KW-0813">Transport</keyword>
<protein>
    <recommendedName>
        <fullName evidence="24">Glutamate receptor 4</fullName>
        <shortName>GluR-4</shortName>
        <shortName>GluR4</shortName>
    </recommendedName>
    <alternativeName>
        <fullName>AMPA-selective glutamate receptor 4</fullName>
    </alternativeName>
    <alternativeName>
        <fullName>GluR-D</fullName>
    </alternativeName>
    <alternativeName>
        <fullName>Glutamate receptor ionotropic, AMPA 4</fullName>
        <shortName>GluA4</shortName>
    </alternativeName>
</protein>
<accession>P19493</accession>
<accession>Q64241</accession>
<comment type="function">
    <text evidence="3 4 10 11 12 15 18 19 20">Ionotropic glutamate receptor that functions as a ligand-gated cation channel, gated by L-glutamate and glutamatergic agonists such as alpha-amino-3-hydroxy-5-methyl-4-isoxazolepropionic acid (AMPA), quisqualic acid, and kainic acid (PubMed:12603841, PubMed:1372042, PubMed:19102704, PubMed:20107073, PubMed:2166337, PubMed:26966189). L-glutamate acts as an excitatory neurotransmitter at many synapses in the central nervous system and plays an important role in fast excitatory synaptic transmission (By similarity). Binding of the excitatory neurotransmitter L-glutamate induces a conformation change, leading to the opening of the cation channel, and thereby converts the chemical signal to an electrical impulse upon entry of monovalent and divalent cations such as sodium and calcium (PubMed:1370372, PubMed:19102704). The receptor then desensitizes rapidly and enters a transient inactive state, characterized by the presence of bound agonist (PubMed:19102704, PubMed:26966189). In the presence of CACNG8, shows resensitization which is characterized by a delayed accumulation of current flux upon continued application of L-glutamate (By similarity).</text>
</comment>
<comment type="catalytic activity">
    <reaction evidence="11">
        <text>Ca(2+)(in) = Ca(2+)(out)</text>
        <dbReference type="Rhea" id="RHEA:29671"/>
        <dbReference type="ChEBI" id="CHEBI:29108"/>
    </reaction>
</comment>
<comment type="catalytic activity">
    <reaction evidence="11">
        <text>Na(+)(in) = Na(+)(out)</text>
        <dbReference type="Rhea" id="RHEA:34963"/>
        <dbReference type="ChEBI" id="CHEBI:29101"/>
    </reaction>
</comment>
<comment type="catalytic activity">
    <reaction evidence="11">
        <text>Mg(2+)(in) = Mg(2+)(out)</text>
        <dbReference type="Rhea" id="RHEA:29827"/>
        <dbReference type="ChEBI" id="CHEBI:18420"/>
    </reaction>
</comment>
<comment type="subunit">
    <text evidence="5 7 8 9 13 15 16 17 20">Homotetramer or heterotetramer of pore-forming glutamate receptor subunits (PubMed:19102704, PubMed:26966189). Tetramers may be formed by the dimerization of dimers (PubMed:26966189). Interacts with EPB41L1 via its C-terminus (PubMed:12574408). Isoform 3 interacts with PICK1 (PubMed:10027300). Found in a complex with GRIA1, GRIA2, GRIA3, CNIH2, CNIH3, CACNG2, CACNG3, CACNG4, CACNG5, CACNG7 and CACNG8 (PubMed:19265014). Interacts with CACNG5 and PRKCG (PubMed:12471040, PubMed:18817736, PubMed:19234459). Found in a complex with GRIA1, GRIA2, GRIA3, DLG4, CACNG8 and CNIH2 (By similarity).</text>
</comment>
<comment type="interaction">
    <interactant intactId="EBI-7761834">
        <id>P19493</id>
    </interactant>
    <interactant intactId="EBI-7761834">
        <id>P19493</id>
        <label>Gria4</label>
    </interactant>
    <organismsDiffer>false</organismsDiffer>
    <experiments>2</experiments>
</comment>
<comment type="interaction">
    <interactant intactId="EBI-7761834">
        <id>P19493</id>
    </interactant>
    <interactant intactId="EBI-936113">
        <id>P97879</id>
        <label>Grip1</label>
    </interactant>
    <organismsDiffer>false</organismsDiffer>
    <experiments>3</experiments>
</comment>
<comment type="interaction">
    <interactant intactId="EBI-7761834">
        <id>P19493</id>
    </interactant>
    <interactant intactId="EBI-7456505">
        <id>P49185</id>
        <label>Mapk8</label>
    </interactant>
    <organismsDiffer>false</organismsDiffer>
    <experiments>2</experiments>
</comment>
<comment type="interaction">
    <interactant intactId="EBI-15852899">
        <id>P19493-2</id>
    </interactant>
    <interactant intactId="EBI-15817825">
        <id>P19491-2</id>
        <label>Gria2</label>
    </interactant>
    <organismsDiffer>false</organismsDiffer>
    <experiments>2</experiments>
</comment>
<comment type="interaction">
    <interactant intactId="EBI-15852899">
        <id>P19493-2</id>
    </interactant>
    <interactant intactId="EBI-15852899">
        <id>P19493-2</id>
        <label>Gria4</label>
    </interactant>
    <organismsDiffer>false</organismsDiffer>
    <experiments>4</experiments>
</comment>
<comment type="subcellular location">
    <subcellularLocation>
        <location evidence="9 10">Cell membrane</location>
        <topology>Multi-pass membrane protein</topology>
    </subcellularLocation>
    <subcellularLocation>
        <location>Postsynaptic cell membrane</location>
        <topology>Multi-pass membrane protein</topology>
    </subcellularLocation>
    <subcellularLocation>
        <location evidence="8">Cell projection</location>
        <location evidence="8">Dendrite</location>
    </subcellularLocation>
    <subcellularLocation>
        <location evidence="3">Postsynaptic cell membrane</location>
        <topology evidence="3">Multi-pass membrane protein</topology>
    </subcellularLocation>
</comment>
<comment type="alternative products">
    <event type="alternative splicing"/>
    <isoform>
        <id>P19493-1</id>
        <name>1</name>
        <name>Flop</name>
        <sequence type="displayed"/>
    </isoform>
    <isoform>
        <id>P19493-2</id>
        <name>2</name>
        <name>Flip</name>
        <sequence type="described" ref="VSP_000123 VSP_000124 VSP_000125"/>
    </isoform>
    <isoform>
        <id>P19493-3</id>
        <name>3</name>
        <name>4C flop</name>
        <sequence type="described" ref="VSP_000126"/>
    </isoform>
</comment>
<comment type="tissue specificity">
    <text evidence="12">Detected in cerebellum.</text>
</comment>
<comment type="domain">
    <text evidence="3">The M4 transmembrane segment mediates tetramerization and is required for cell surface expression.</text>
</comment>
<comment type="PTM">
    <text evidence="2">Palmitoylated. Depalmitoylated upon L-glutamate stimulation. ZDHHC3/GODZ specifically palmitoylates Cys-611, which leads to Golgi retention and decreased cell surface expression. In contrast, Cys-837 palmitoylation does not affect cell surface expression but regulates stimulation-dependent endocytosis.</text>
</comment>
<comment type="PTM">
    <text evidence="8">Phosphorylated at Ser-862 by PRKCG; phosphorylation increases plasma membrane-associated GRI4 expression.</text>
</comment>
<comment type="miscellaneous">
    <text evidence="10 12 19">The postsynaptic actions of L-glutamate are mediated by a variety of receptors that are named according to their selective agonists (PubMed:12603841, PubMed:1372042, PubMed:2166337). This receptor binds AMPA (quisqualate) &gt; L-glutamate &gt; kainate (PubMed:12603841, PubMed:1372042, PubMed:2166337).</text>
</comment>
<comment type="similarity">
    <text evidence="24">Belongs to the glutamate-gated ion channel (TC 1.A.10.1) family. GRIA4 subfamily.</text>
</comment>
<reference key="1">
    <citation type="journal article" date="1990" name="Science">
        <title>A family of AMPA-selective glutamate receptors.</title>
        <authorList>
            <person name="Keinaenen K."/>
            <person name="Wisden W."/>
            <person name="Sommer B."/>
            <person name="Werner P."/>
            <person name="Herb A."/>
            <person name="Verdoorn T.A."/>
            <person name="Sakmann B."/>
            <person name="Seeburg P.H."/>
        </authorList>
    </citation>
    <scope>NUCLEOTIDE SEQUENCE [MRNA] (ISOFORM 1)</scope>
    <scope>FUNCTION</scope>
    <source>
        <tissue>Brain</tissue>
    </source>
</reference>
<reference key="2">
    <citation type="journal article" date="1990" name="Neuron">
        <title>Cloning of a novel glutamate receptor subunit, GluR5: expression in the nervous system during development.</title>
        <authorList>
            <person name="Bettler B."/>
            <person name="Boulter J."/>
            <person name="Hermans-Borgmeyer I."/>
            <person name="O'Shea-Greenfield A."/>
            <person name="Deneris E.S."/>
            <person name="Moll C."/>
            <person name="Borgmeyer U."/>
            <person name="Hollmann M."/>
            <person name="Heinemann S.F."/>
        </authorList>
    </citation>
    <scope>NUCLEOTIDE SEQUENCE [MRNA] (ISOFORM 2)</scope>
</reference>
<reference key="3">
    <citation type="journal article" date="1990" name="Science">
        <title>Flip and flop: a cell-specific functional switch in glutamate-operated channels of the CNS.</title>
        <authorList>
            <person name="Sommer B."/>
            <person name="Keinaenen K."/>
            <person name="Verdoorn T.A."/>
            <person name="Wisden W."/>
            <person name="Burnashev N."/>
            <person name="Herb A."/>
            <person name="Koehler M."/>
            <person name="Takagi T."/>
            <person name="Sakmann B."/>
            <person name="Seeburg P.H."/>
        </authorList>
    </citation>
    <scope>NUCLEOTIDE SEQUENCE [MRNA] (ISOFORM 2)</scope>
</reference>
<reference key="4">
    <citation type="journal article" date="1992" name="J. Neurosci.">
        <title>Molecular cloning and development analysis of a new glutamate receptor subunit isoform in cerebellum.</title>
        <authorList>
            <person name="Gallo V."/>
            <person name="Upson L.M."/>
            <person name="Hayes W.P."/>
            <person name="Vyklicky L. Jr."/>
            <person name="Winters C.A."/>
            <person name="Buonanno A."/>
        </authorList>
    </citation>
    <scope>NUCLEOTIDE SEQUENCE [MRNA] (ISOFORM 3)</scope>
    <scope>FUNCTION</scope>
    <scope>TISSUE SPECIFICITY</scope>
    <source>
        <strain>Sprague-Dawley</strain>
        <tissue>Brain</tissue>
    </source>
</reference>
<reference key="5">
    <citation type="journal article" date="2003" name="J. Neurochem.">
        <title>Characterization of the functional role of the N-glycans in the AMPA receptor ligand-binding domain.</title>
        <authorList>
            <person name="Pasternack A."/>
            <person name="Coleman S.K."/>
            <person name="Fethiere J."/>
            <person name="Madden D.R."/>
            <person name="LeCaer J.P."/>
            <person name="Rossier J."/>
            <person name="Pasternack M."/>
            <person name="Keinaenen K."/>
        </authorList>
    </citation>
    <scope>PARTIAL PROTEIN SEQUENCE</scope>
    <scope>GLYCOSYLATION AT ASN-407 AND ASN-414</scope>
    <scope>SUBCELLULAR LOCATION</scope>
    <scope>FUNCTION</scope>
    <scope>MUTAGENESIS OF ASN-407 AND ASN-414</scope>
</reference>
<reference key="6">
    <citation type="journal article" date="1992" name="Neuron">
        <title>Divalent ion permeability of AMPA receptor channels is dominated by the edited form of a single subunit.</title>
        <authorList>
            <person name="Burnashev N."/>
            <person name="Monyer H."/>
            <person name="Seeburg P.H."/>
            <person name="Sakmann B."/>
        </authorList>
    </citation>
    <scope>FUNCTION</scope>
    <scope>CATALYTIC ACTIVITY</scope>
</reference>
<reference key="7">
    <citation type="journal article" date="1999" name="Neuron">
        <title>Clustering of AMPA receptors by the synaptic PDZ domain-containing protein PICK1.</title>
        <authorList>
            <person name="Xia J."/>
            <person name="Zhang X."/>
            <person name="Staudinger J."/>
            <person name="Huganir R.L."/>
        </authorList>
    </citation>
    <scope>INTERACTION WITH PICK1 (ISOFORM 3)</scope>
</reference>
<reference key="8">
    <citation type="journal article" date="2003" name="J. Biol. Chem.">
        <title>Protein kinase C gamma associates directly with the GluR4 alpha-amino-3-hydroxy-5-methyl-4-isoxazole propionate receptor subunit. Effect on receptor phosphorylation.</title>
        <authorList>
            <person name="Correia S.S."/>
            <person name="Duarte C.B."/>
            <person name="Faro C.J."/>
            <person name="Pires E.V."/>
            <person name="Carvalho A.L."/>
        </authorList>
    </citation>
    <scope>PHOSPHORYLATION AT SER-862</scope>
    <scope>INTERACTION WITH PRKCG</scope>
    <scope>SUBCELLULAR LOCATION</scope>
</reference>
<reference key="9">
    <citation type="journal article" date="2003" name="J. Neurosci.">
        <title>Surface expression of GluR-D AMPA receptor is dependent on an interaction between its C-terminal domain and a 4.1 protein.</title>
        <authorList>
            <person name="Coleman S.K."/>
            <person name="Cai C."/>
            <person name="Mottershead D.G."/>
            <person name="Haapalahti J.-P."/>
            <person name="Keinaenen K."/>
        </authorList>
    </citation>
    <scope>SUBCELLULAR LOCATION</scope>
    <scope>INTERACTION WITH EPB41L1</scope>
</reference>
<reference key="10">
    <citation type="journal article" date="2008" name="Neuron">
        <title>AMPA receptor subunit-specific regulation by a distinct family of type II TARPs.</title>
        <authorList>
            <person name="Kato A.S."/>
            <person name="Siuda E.R."/>
            <person name="Nisenbaum E.S."/>
            <person name="Bredt D.S."/>
        </authorList>
    </citation>
    <scope>INTERACTION WITH CACNG5</scope>
</reference>
<reference key="11">
    <citation type="journal article" date="2009" name="Nat. Neurosci.">
        <title>Selective regulation of long-form calcium-permeable AMPA receptors by an atypical TARP, gamma-5.</title>
        <authorList>
            <person name="Soto D."/>
            <person name="Coombs I.D."/>
            <person name="Renzi M."/>
            <person name="Zonouzi M."/>
            <person name="Farrant M."/>
            <person name="Cull-Candy S.G."/>
        </authorList>
    </citation>
    <scope>INTERACTION WITH CACNG5</scope>
</reference>
<reference key="12">
    <citation type="journal article" date="2009" name="Nat. Neurosci.">
        <authorList>
            <person name="Soto D."/>
            <person name="Coombs I.D."/>
            <person name="Renzi M."/>
            <person name="Zonouzi M."/>
            <person name="Farrant M."/>
            <person name="Cull-Candy S.G."/>
        </authorList>
    </citation>
    <scope>ERRATUM OF PUBMED:19234459</scope>
</reference>
<reference key="13">
    <citation type="journal article" date="2009" name="Science">
        <title>Functional proteomics identify cornichon proteins as auxiliary subunits of AMPA receptors.</title>
        <authorList>
            <person name="Schwenk J."/>
            <person name="Harmel N."/>
            <person name="Zolles G."/>
            <person name="Bildl W."/>
            <person name="Kulik A."/>
            <person name="Heimrich B."/>
            <person name="Chisaka O."/>
            <person name="Jonas P."/>
            <person name="Schulte U."/>
            <person name="Fakler B."/>
            <person name="Kloecker N."/>
        </authorList>
    </citation>
    <scope>SUBUNIT</scope>
    <scope>IDENTIFICATION BY MASS SPECTROMETRY</scope>
</reference>
<reference key="14">
    <citation type="journal article" date="2013" name="J. Proteome Res.">
        <title>Site-specific glycan-peptide analysis for determination of N-glycoproteome heterogeneity.</title>
        <authorList>
            <person name="Parker B.L."/>
            <person name="Thaysen-Andersen M."/>
            <person name="Solis N."/>
            <person name="Scott N.E."/>
            <person name="Larsen M.R."/>
            <person name="Graham M.E."/>
            <person name="Packer N.H."/>
            <person name="Cordwell S.J."/>
        </authorList>
    </citation>
    <scope>GLYCOSYLATION [LARGE SCALE ANALYSIS] AT ASN-258</scope>
    <scope>IDENTIFICATION BY MASS SPECTROMETRY [LARGE SCALE ANALYSIS]</scope>
    <source>
        <tissue>Brain</tissue>
    </source>
</reference>
<reference evidence="26 27" key="15">
    <citation type="journal article" date="2008" name="Biochemistry">
        <title>Correlating AMPA receptor activation and cleft closure across subunits: crystal structures of the GluR4 ligand-binding domain in complex with full and partial agonists.</title>
        <authorList>
            <person name="Gill A."/>
            <person name="Birdsey-Benson A."/>
            <person name="Jones B.L."/>
            <person name="Henderson L.P."/>
            <person name="Madden D.R."/>
        </authorList>
    </citation>
    <scope>X-RAY CRYSTALLOGRAPHY (1.85 ANGSTROMS) OF 416-795 IN COMPLEX WITH GLUTAMATE AND DIHYDROKAINIC ACID</scope>
    <scope>FUNCTION</scope>
    <scope>SUBUNIT</scope>
</reference>
<reference evidence="28 29" key="16">
    <citation type="journal article" date="2008" name="FEBS Lett.">
        <title>Molecular mechanism of agonist recognition by the ligand-binding core of the ionotropic glutamate receptor 4.</title>
        <authorList>
            <person name="Kasper C."/>
            <person name="Frydenvang K."/>
            <person name="Naur P."/>
            <person name="Gajhede M."/>
            <person name="Pickering D.S."/>
            <person name="Kastrup J.S."/>
        </authorList>
    </citation>
    <scope>X-RAY CRYSTALLOGRAPHY (1.40 ANGSTROMS) OF 415-796 IN COMPLEX WITH GLUTAMATE</scope>
    <scope>AMPA BINDING</scope>
    <scope>DISULFIDE BOND</scope>
</reference>
<reference evidence="30 31" key="17">
    <citation type="journal article" date="2010" name="J. Neurosci.">
        <title>Enhanced efficacy without further cleft closure: reevaluating twist as a source of agonist efficacy in AMPA receptors.</title>
        <authorList>
            <person name="Birdsey-Benson A."/>
            <person name="Gill A."/>
            <person name="Henderson L.P."/>
            <person name="Madden D.R."/>
        </authorList>
    </citation>
    <scope>X-RAY CRYSTALLOGRAPHY (1.90 ANGSTROMS) OF 416-795 IN COMPLEX WITH GLUTAMATE AND DIHYDROKAINIC ACID</scope>
    <scope>FUNCTION</scope>
</reference>
<reference evidence="32" key="18">
    <citation type="journal article" date="2016" name="Science">
        <title>Structure and organization of heteromeric AMPA-type glutamate receptors.</title>
        <authorList>
            <person name="Herguedas B."/>
            <person name="Garcia-Nafria J."/>
            <person name="Cais O."/>
            <person name="Fernandez-Leiro R."/>
            <person name="Krieger J."/>
            <person name="Ho H."/>
            <person name="Greger I.H."/>
        </authorList>
    </citation>
    <scope>X-RAY CRYSTALLOGRAPHY (2.50 ANGSTROMS) OF 22-401 IN COMPLEX WITH GRIA2</scope>
    <scope>SUBUNIT</scope>
    <scope>DISULFIDE BOND</scope>
    <scope>FUNCTION</scope>
</reference>
<evidence type="ECO:0000250" key="1"/>
<evidence type="ECO:0000250" key="2">
    <source>
        <dbReference type="UniProtKB" id="P23819"/>
    </source>
</evidence>
<evidence type="ECO:0000250" key="3">
    <source>
        <dbReference type="UniProtKB" id="P42262"/>
    </source>
</evidence>
<evidence type="ECO:0000250" key="4">
    <source>
        <dbReference type="UniProtKB" id="P48058"/>
    </source>
</evidence>
<evidence type="ECO:0000250" key="5">
    <source>
        <dbReference type="UniProtKB" id="Q9Z2W8"/>
    </source>
</evidence>
<evidence type="ECO:0000255" key="6"/>
<evidence type="ECO:0000269" key="7">
    <source>
    </source>
</evidence>
<evidence type="ECO:0000269" key="8">
    <source>
    </source>
</evidence>
<evidence type="ECO:0000269" key="9">
    <source>
    </source>
</evidence>
<evidence type="ECO:0000269" key="10">
    <source>
    </source>
</evidence>
<evidence type="ECO:0000269" key="11">
    <source>
    </source>
</evidence>
<evidence type="ECO:0000269" key="12">
    <source>
    </source>
</evidence>
<evidence type="ECO:0000269" key="13">
    <source>
    </source>
</evidence>
<evidence type="ECO:0000269" key="14">
    <source>
    </source>
</evidence>
<evidence type="ECO:0000269" key="15">
    <source>
    </source>
</evidence>
<evidence type="ECO:0000269" key="16">
    <source>
    </source>
</evidence>
<evidence type="ECO:0000269" key="17">
    <source>
    </source>
</evidence>
<evidence type="ECO:0000269" key="18">
    <source>
    </source>
</evidence>
<evidence type="ECO:0000269" key="19">
    <source>
    </source>
</evidence>
<evidence type="ECO:0000269" key="20">
    <source>
    </source>
</evidence>
<evidence type="ECO:0000303" key="21">
    <source>
    </source>
</evidence>
<evidence type="ECO:0000303" key="22">
    <source>
    </source>
</evidence>
<evidence type="ECO:0000303" key="23">
    <source>
    </source>
</evidence>
<evidence type="ECO:0000305" key="24"/>
<evidence type="ECO:0000312" key="25">
    <source>
        <dbReference type="RGD" id="61863"/>
    </source>
</evidence>
<evidence type="ECO:0007744" key="26">
    <source>
        <dbReference type="PDB" id="3EN3"/>
    </source>
</evidence>
<evidence type="ECO:0007744" key="27">
    <source>
        <dbReference type="PDB" id="3EPE"/>
    </source>
</evidence>
<evidence type="ECO:0007744" key="28">
    <source>
        <dbReference type="PDB" id="3FAS"/>
    </source>
</evidence>
<evidence type="ECO:0007744" key="29">
    <source>
        <dbReference type="PDB" id="3FAT"/>
    </source>
</evidence>
<evidence type="ECO:0007744" key="30">
    <source>
        <dbReference type="PDB" id="3KEI"/>
    </source>
</evidence>
<evidence type="ECO:0007744" key="31">
    <source>
        <dbReference type="PDB" id="3KFM"/>
    </source>
</evidence>
<evidence type="ECO:0007744" key="32">
    <source>
        <dbReference type="PDB" id="5FWX"/>
    </source>
</evidence>
<evidence type="ECO:0007744" key="33">
    <source>
    </source>
</evidence>
<evidence type="ECO:0007829" key="34">
    <source>
        <dbReference type="PDB" id="3FAS"/>
    </source>
</evidence>
<evidence type="ECO:0007829" key="35">
    <source>
        <dbReference type="PDB" id="3KEI"/>
    </source>
</evidence>
<evidence type="ECO:0007829" key="36">
    <source>
        <dbReference type="PDB" id="4GPA"/>
    </source>
</evidence>
<evidence type="ECO:0007829" key="37">
    <source>
        <dbReference type="PDB" id="5FWX"/>
    </source>
</evidence>
<dbReference type="EMBL" id="M36421">
    <property type="protein sequence ID" value="AAA41246.1"/>
    <property type="molecule type" value="mRNA"/>
</dbReference>
<dbReference type="EMBL" id="M85037">
    <property type="protein sequence ID" value="AAA41242.1"/>
    <property type="molecule type" value="mRNA"/>
</dbReference>
<dbReference type="EMBL" id="M38063">
    <property type="protein sequence ID" value="AAA63481.1"/>
    <property type="molecule type" value="mRNA"/>
</dbReference>
<dbReference type="EMBL" id="S94371">
    <property type="protein sequence ID" value="AAB21763.1"/>
    <property type="molecule type" value="mRNA"/>
</dbReference>
<dbReference type="PIR" id="A44839">
    <property type="entry name" value="A44839"/>
</dbReference>
<dbReference type="PIR" id="D40170">
    <property type="entry name" value="D40170"/>
</dbReference>
<dbReference type="RefSeq" id="NP_001106655.1">
    <property type="nucleotide sequence ID" value="NM_001113184.1"/>
</dbReference>
<dbReference type="RefSeq" id="NP_058959.2">
    <property type="nucleotide sequence ID" value="NM_017263.2"/>
</dbReference>
<dbReference type="PDB" id="3EN3">
    <property type="method" value="X-ray"/>
    <property type="resolution" value="2.43 A"/>
    <property type="chains" value="A=416-528, A=654-795"/>
</dbReference>
<dbReference type="PDB" id="3EPE">
    <property type="method" value="X-ray"/>
    <property type="resolution" value="1.85 A"/>
    <property type="chains" value="A/B=416-528, A/B=654-795"/>
</dbReference>
<dbReference type="PDB" id="3FAS">
    <property type="method" value="X-ray"/>
    <property type="resolution" value="1.40 A"/>
    <property type="chains" value="A/B=415-528, A/B=654-796"/>
</dbReference>
<dbReference type="PDB" id="3FAT">
    <property type="method" value="X-ray"/>
    <property type="resolution" value="1.90 A"/>
    <property type="chains" value="A/B/C=415-528, A/B/C=654-796"/>
</dbReference>
<dbReference type="PDB" id="3KEI">
    <property type="method" value="X-ray"/>
    <property type="resolution" value="1.90 A"/>
    <property type="chains" value="A/B=416-528, A/B=654-795"/>
</dbReference>
<dbReference type="PDB" id="3KFM">
    <property type="method" value="X-ray"/>
    <property type="resolution" value="2.20 A"/>
    <property type="chains" value="A=416-528, A=654-795"/>
</dbReference>
<dbReference type="PDB" id="4GPA">
    <property type="method" value="X-ray"/>
    <property type="resolution" value="2.25 A"/>
    <property type="chains" value="A=22-401"/>
</dbReference>
<dbReference type="PDB" id="5FWX">
    <property type="method" value="X-ray"/>
    <property type="resolution" value="2.50 A"/>
    <property type="chains" value="B/D=22-401"/>
</dbReference>
<dbReference type="PDBsum" id="3EN3"/>
<dbReference type="PDBsum" id="3EPE"/>
<dbReference type="PDBsum" id="3FAS"/>
<dbReference type="PDBsum" id="3FAT"/>
<dbReference type="PDBsum" id="3KEI"/>
<dbReference type="PDBsum" id="3KFM"/>
<dbReference type="PDBsum" id="4GPA"/>
<dbReference type="PDBsum" id="5FWX"/>
<dbReference type="EMDB" id="EMD-20332"/>
<dbReference type="EMDB" id="EMD-20717"/>
<dbReference type="EMDB" id="EMD-20732"/>
<dbReference type="SMR" id="P19493"/>
<dbReference type="BioGRID" id="248252">
    <property type="interactions" value="36"/>
</dbReference>
<dbReference type="CORUM" id="P19493"/>
<dbReference type="DIP" id="DIP-41142N"/>
<dbReference type="FunCoup" id="P19493">
    <property type="interactions" value="1313"/>
</dbReference>
<dbReference type="IntAct" id="P19493">
    <property type="interactions" value="5"/>
</dbReference>
<dbReference type="MINT" id="P19493"/>
<dbReference type="STRING" id="10116.ENSRNOP00000009542"/>
<dbReference type="BindingDB" id="P19493"/>
<dbReference type="ChEMBL" id="CHEMBL3505"/>
<dbReference type="DrugCentral" id="P19493"/>
<dbReference type="TCDB" id="1.A.10.1.2">
    <property type="family name" value="the glutamate-gated ion channel (gic) family of neurotransmitter receptors"/>
</dbReference>
<dbReference type="GlyCosmos" id="P19493">
    <property type="glycosylation" value="6 sites, 9 glycans"/>
</dbReference>
<dbReference type="GlyGen" id="P19493">
    <property type="glycosylation" value="6 sites, 9 N-linked glycans (1 site)"/>
</dbReference>
<dbReference type="iPTMnet" id="P19493"/>
<dbReference type="PhosphoSitePlus" id="P19493"/>
<dbReference type="SwissPalm" id="P19493"/>
<dbReference type="PaxDb" id="10116-ENSRNOP00000009542"/>
<dbReference type="GeneID" id="29629"/>
<dbReference type="KEGG" id="rno:29629"/>
<dbReference type="UCSC" id="RGD:61863">
    <molecule id="P19493-1"/>
    <property type="organism name" value="rat"/>
</dbReference>
<dbReference type="AGR" id="RGD:61863"/>
<dbReference type="CTD" id="2893"/>
<dbReference type="RGD" id="61863">
    <property type="gene designation" value="Gria4"/>
</dbReference>
<dbReference type="eggNOG" id="KOG1054">
    <property type="taxonomic scope" value="Eukaryota"/>
</dbReference>
<dbReference type="InParanoid" id="P19493"/>
<dbReference type="OrthoDB" id="5984008at2759"/>
<dbReference type="PhylomeDB" id="P19493"/>
<dbReference type="Reactome" id="R-RNO-399710">
    <property type="pathway name" value="Activation of AMPA receptors"/>
</dbReference>
<dbReference type="Reactome" id="R-RNO-399719">
    <property type="pathway name" value="Trafficking of AMPA receptors"/>
</dbReference>
<dbReference type="Reactome" id="R-RNO-416993">
    <property type="pathway name" value="Trafficking of GluR2-containing AMPA receptors"/>
</dbReference>
<dbReference type="Reactome" id="R-RNO-438066">
    <property type="pathway name" value="Unblocking of NMDA receptors, glutamate binding and activation"/>
</dbReference>
<dbReference type="Reactome" id="R-RNO-8849932">
    <property type="pathway name" value="Synaptic adhesion-like molecules"/>
</dbReference>
<dbReference type="EvolutionaryTrace" id="P19493"/>
<dbReference type="PRO" id="PR:P19493"/>
<dbReference type="Proteomes" id="UP000002494">
    <property type="component" value="Unplaced"/>
</dbReference>
<dbReference type="GO" id="GO:0032281">
    <property type="term" value="C:AMPA glutamate receptor complex"/>
    <property type="evidence" value="ECO:0000314"/>
    <property type="project" value="UniProtKB"/>
</dbReference>
<dbReference type="GO" id="GO:0030425">
    <property type="term" value="C:dendrite"/>
    <property type="evidence" value="ECO:0000314"/>
    <property type="project" value="UniProtKB"/>
</dbReference>
<dbReference type="GO" id="GO:0043197">
    <property type="term" value="C:dendritic spine"/>
    <property type="evidence" value="ECO:0000314"/>
    <property type="project" value="ARUK-UCL"/>
</dbReference>
<dbReference type="GO" id="GO:0098978">
    <property type="term" value="C:glutamatergic synapse"/>
    <property type="evidence" value="ECO:0000314"/>
    <property type="project" value="SynGO"/>
</dbReference>
<dbReference type="GO" id="GO:0008328">
    <property type="term" value="C:ionotropic glutamate receptor complex"/>
    <property type="evidence" value="ECO:0000304"/>
    <property type="project" value="UniProtKB"/>
</dbReference>
<dbReference type="GO" id="GO:0032983">
    <property type="term" value="C:kainate selective glutamate receptor complex"/>
    <property type="evidence" value="ECO:0000314"/>
    <property type="project" value="UniProtKB"/>
</dbReference>
<dbReference type="GO" id="GO:0043025">
    <property type="term" value="C:neuronal cell body"/>
    <property type="evidence" value="ECO:0000314"/>
    <property type="project" value="UniProtKB"/>
</dbReference>
<dbReference type="GO" id="GO:0005886">
    <property type="term" value="C:plasma membrane"/>
    <property type="evidence" value="ECO:0000314"/>
    <property type="project" value="UniProtKB"/>
</dbReference>
<dbReference type="GO" id="GO:0014069">
    <property type="term" value="C:postsynaptic density"/>
    <property type="evidence" value="ECO:0000314"/>
    <property type="project" value="UniProtKB"/>
</dbReference>
<dbReference type="GO" id="GO:0098839">
    <property type="term" value="C:postsynaptic density membrane"/>
    <property type="evidence" value="ECO:0000314"/>
    <property type="project" value="SynGO"/>
</dbReference>
<dbReference type="GO" id="GO:0048787">
    <property type="term" value="C:presynaptic active zone membrane"/>
    <property type="evidence" value="ECO:0000314"/>
    <property type="project" value="SynGO"/>
</dbReference>
<dbReference type="GO" id="GO:0045202">
    <property type="term" value="C:synapse"/>
    <property type="evidence" value="ECO:0000315"/>
    <property type="project" value="UniProtKB"/>
</dbReference>
<dbReference type="GO" id="GO:0043195">
    <property type="term" value="C:terminal bouton"/>
    <property type="evidence" value="ECO:0000314"/>
    <property type="project" value="RGD"/>
</dbReference>
<dbReference type="GO" id="GO:0004971">
    <property type="term" value="F:AMPA glutamate receptor activity"/>
    <property type="evidence" value="ECO:0000315"/>
    <property type="project" value="RGD"/>
</dbReference>
<dbReference type="GO" id="GO:0004970">
    <property type="term" value="F:glutamate-gated receptor activity"/>
    <property type="evidence" value="ECO:0000314"/>
    <property type="project" value="UniProtKB"/>
</dbReference>
<dbReference type="GO" id="GO:0042802">
    <property type="term" value="F:identical protein binding"/>
    <property type="evidence" value="ECO:0000353"/>
    <property type="project" value="IntAct"/>
</dbReference>
<dbReference type="GO" id="GO:0099507">
    <property type="term" value="F:ligand-gated monoatomic ion channel activity involved in regulation of presynaptic membrane potential"/>
    <property type="evidence" value="ECO:0000266"/>
    <property type="project" value="RGD"/>
</dbReference>
<dbReference type="GO" id="GO:1904315">
    <property type="term" value="F:transmitter-gated monoatomic ion channel activity involved in regulation of postsynaptic membrane potential"/>
    <property type="evidence" value="ECO:0000266"/>
    <property type="project" value="RGD"/>
</dbReference>
<dbReference type="GO" id="GO:0007268">
    <property type="term" value="P:chemical synaptic transmission"/>
    <property type="evidence" value="ECO:0000315"/>
    <property type="project" value="RGD"/>
</dbReference>
<dbReference type="GO" id="GO:0050804">
    <property type="term" value="P:modulation of chemical synaptic transmission"/>
    <property type="evidence" value="ECO:0000315"/>
    <property type="project" value="UniProtKB"/>
</dbReference>
<dbReference type="GO" id="GO:0034392">
    <property type="term" value="P:negative regulation of smooth muscle cell apoptotic process"/>
    <property type="evidence" value="ECO:0000266"/>
    <property type="project" value="RGD"/>
</dbReference>
<dbReference type="GO" id="GO:0051968">
    <property type="term" value="P:positive regulation of synaptic transmission, glutamatergic"/>
    <property type="evidence" value="ECO:0000315"/>
    <property type="project" value="UniProtKB"/>
</dbReference>
<dbReference type="GO" id="GO:0050803">
    <property type="term" value="P:regulation of synapse structure or activity"/>
    <property type="evidence" value="ECO:0000304"/>
    <property type="project" value="UniProtKB"/>
</dbReference>
<dbReference type="GO" id="GO:0060992">
    <property type="term" value="P:response to fungicide"/>
    <property type="evidence" value="ECO:0000270"/>
    <property type="project" value="RGD"/>
</dbReference>
<dbReference type="GO" id="GO:0035249">
    <property type="term" value="P:synaptic transmission, glutamatergic"/>
    <property type="evidence" value="ECO:0000318"/>
    <property type="project" value="GO_Central"/>
</dbReference>
<dbReference type="CDD" id="cd06388">
    <property type="entry name" value="PBP1_iGluR_AMPA_GluR4"/>
    <property type="match status" value="1"/>
</dbReference>
<dbReference type="CDD" id="cd13727">
    <property type="entry name" value="PBP2_iGluR_AMPA_GluR4"/>
    <property type="match status" value="1"/>
</dbReference>
<dbReference type="FunFam" id="1.10.287.70:FF:000067">
    <property type="entry name" value="glutamate receptor 2 isoform X1"/>
    <property type="match status" value="1"/>
</dbReference>
<dbReference type="FunFam" id="1.10.287.70:FF:000099">
    <property type="entry name" value="glutamate receptor 2 isoform X1"/>
    <property type="match status" value="1"/>
</dbReference>
<dbReference type="FunFam" id="3.40.50.2300:FF:000261">
    <property type="entry name" value="glutamate receptor 4 isoform X7"/>
    <property type="match status" value="1"/>
</dbReference>
<dbReference type="FunFam" id="3.40.190.10:FF:000001">
    <property type="entry name" value="Glutamate receptor ionotropic, kainate 2"/>
    <property type="match status" value="1"/>
</dbReference>
<dbReference type="FunFam" id="3.40.190.10:FF:000666">
    <property type="entry name" value="Glutamate receptor, ionotropic, AMPA 2a"/>
    <property type="match status" value="1"/>
</dbReference>
<dbReference type="Gene3D" id="1.10.287.70">
    <property type="match status" value="2"/>
</dbReference>
<dbReference type="Gene3D" id="3.40.50.2300">
    <property type="match status" value="2"/>
</dbReference>
<dbReference type="Gene3D" id="3.40.190.10">
    <property type="entry name" value="Periplasmic binding protein-like II"/>
    <property type="match status" value="2"/>
</dbReference>
<dbReference type="InterPro" id="IPR001828">
    <property type="entry name" value="ANF_lig-bd_rcpt"/>
</dbReference>
<dbReference type="InterPro" id="IPR019594">
    <property type="entry name" value="Glu/Gly-bd"/>
</dbReference>
<dbReference type="InterPro" id="IPR001508">
    <property type="entry name" value="Iono_Glu_rcpt_met"/>
</dbReference>
<dbReference type="InterPro" id="IPR015683">
    <property type="entry name" value="Ionotropic_Glu_rcpt"/>
</dbReference>
<dbReference type="InterPro" id="IPR001320">
    <property type="entry name" value="Iontro_rcpt_C"/>
</dbReference>
<dbReference type="InterPro" id="IPR028082">
    <property type="entry name" value="Peripla_BP_I"/>
</dbReference>
<dbReference type="PANTHER" id="PTHR18966">
    <property type="entry name" value="IONOTROPIC GLUTAMATE RECEPTOR"/>
    <property type="match status" value="1"/>
</dbReference>
<dbReference type="Pfam" id="PF01094">
    <property type="entry name" value="ANF_receptor"/>
    <property type="match status" value="1"/>
</dbReference>
<dbReference type="Pfam" id="PF00060">
    <property type="entry name" value="Lig_chan"/>
    <property type="match status" value="1"/>
</dbReference>
<dbReference type="Pfam" id="PF10613">
    <property type="entry name" value="Lig_chan-Glu_bd"/>
    <property type="match status" value="1"/>
</dbReference>
<dbReference type="PRINTS" id="PR00177">
    <property type="entry name" value="NMDARECEPTOR"/>
</dbReference>
<dbReference type="SMART" id="SM00918">
    <property type="entry name" value="Lig_chan-Glu_bd"/>
    <property type="match status" value="1"/>
</dbReference>
<dbReference type="SMART" id="SM00079">
    <property type="entry name" value="PBPe"/>
    <property type="match status" value="1"/>
</dbReference>
<dbReference type="SUPFAM" id="SSF53822">
    <property type="entry name" value="Periplasmic binding protein-like I"/>
    <property type="match status" value="1"/>
</dbReference>
<dbReference type="SUPFAM" id="SSF53850">
    <property type="entry name" value="Periplasmic binding protein-like II"/>
    <property type="match status" value="1"/>
</dbReference>
<dbReference type="SUPFAM" id="SSF81324">
    <property type="entry name" value="Voltage-gated potassium channels"/>
    <property type="match status" value="1"/>
</dbReference>
<proteinExistence type="evidence at protein level"/>
<organism>
    <name type="scientific">Rattus norvegicus</name>
    <name type="common">Rat</name>
    <dbReference type="NCBI Taxonomy" id="10116"/>
    <lineage>
        <taxon>Eukaryota</taxon>
        <taxon>Metazoa</taxon>
        <taxon>Chordata</taxon>
        <taxon>Craniata</taxon>
        <taxon>Vertebrata</taxon>
        <taxon>Euteleostomi</taxon>
        <taxon>Mammalia</taxon>
        <taxon>Eutheria</taxon>
        <taxon>Euarchontoglires</taxon>
        <taxon>Glires</taxon>
        <taxon>Rodentia</taxon>
        <taxon>Myomorpha</taxon>
        <taxon>Muroidea</taxon>
        <taxon>Muridae</taxon>
        <taxon>Murinae</taxon>
        <taxon>Rattus</taxon>
    </lineage>
</organism>
<sequence length="902" mass="100758">MRIICRQIVLLFSGFWGLAMGAFPSSVQIGGLFIRNTDQEYTAFRLAIFLHNTSPNASEAPFNLVPHVDNIETANSFAVTNAFCSQYSRGVFAIFGLYDKRSVHTLTSFCSALHISLITPSFPTEGESQFVLQLRPSLRGALLSLLDHYEWNCFVFLYDTDRGYSILQAIMEKAGQNGWHVSAICVENFNDVSYRQLLEELDRRQEKKFVIDCEIERLQNILEQIVSVGKHVKGYHYIIANLGFKDISLERFIHGGANVTGFQLVDFNTPMVTKLMDRWKKLDQREYPGSETPPKYTSALTYDGVLVMAETFRSLRRQKIDISRRGNAGDCLANPAAPWGQGIDMERTLKQVRIQGLTGNVQFDHYGRRVNYTMDVFELKSTGPRKVGYWNDMDKLVLIQDMPTLGNDTAAIENRTVVVTTIMESPYVMYKKNHEMFEGNDKYEGYCVDLASEIAKHIGIKYKIAIVPDGKYGARDADTKIWNGMVGELVYGKAEIAIAPLTITLVREEVIDFSKPFMSLGISIMIKKPQKSKPGVFSFLDPLAYEIWMCIVFAYIGVSVVLFLVSRFSPYEWHTEEPEDGKEGPSDQPPNEFGIFNSLWFSLGAFMQQGCDISPRSLSGRIVGGVWWFFTLIIISSYTANLAAFLTVERMVSPIESAEDLAKQTEIAYGTLDSGSTKEFFRRSKIAVYEKMWTYMRSAEPSVFTRTTAEGVARVRKSKGKFAFLLESTMNEYTEQRKPCDTMKVGGNLDSKGYGVATPKGSSLGNAVNLAVLKLNEQGLLDKLKNKWWYDKGECGSGGGDSKDKTSALSLSNVAGVFYILVGGLGLAMLVALIEFCYKSRAEAKRMKLTFSEATRNKARLSITGSVGENGRVLTPDCPKAVHTGTAIRQSSGLAVIASDLP</sequence>